<feature type="chain" id="PRO_0000124480" description="Small ribosomal subunit protein uS7c">
    <location>
        <begin position="1"/>
        <end position="155"/>
    </location>
</feature>
<dbReference type="EMBL" id="AF188856">
    <property type="protein sequence ID" value="AAF82679.1"/>
    <property type="molecule type" value="Genomic_DNA"/>
</dbReference>
<dbReference type="RefSeq" id="YP_010167590.1">
    <property type="nucleotide sequence ID" value="NC_057567.1"/>
</dbReference>
<dbReference type="RefSeq" id="YP_010167600.1">
    <property type="nucleotide sequence ID" value="NC_057567.1"/>
</dbReference>
<dbReference type="SMR" id="Q9MSP1"/>
<dbReference type="GeneID" id="67273938"/>
<dbReference type="GeneID" id="67273968"/>
<dbReference type="GO" id="GO:0009507">
    <property type="term" value="C:chloroplast"/>
    <property type="evidence" value="ECO:0007669"/>
    <property type="project" value="UniProtKB-SubCell"/>
</dbReference>
<dbReference type="GO" id="GO:0015935">
    <property type="term" value="C:small ribosomal subunit"/>
    <property type="evidence" value="ECO:0007669"/>
    <property type="project" value="InterPro"/>
</dbReference>
<dbReference type="GO" id="GO:0019843">
    <property type="term" value="F:rRNA binding"/>
    <property type="evidence" value="ECO:0007669"/>
    <property type="project" value="UniProtKB-UniRule"/>
</dbReference>
<dbReference type="GO" id="GO:0003735">
    <property type="term" value="F:structural constituent of ribosome"/>
    <property type="evidence" value="ECO:0007669"/>
    <property type="project" value="InterPro"/>
</dbReference>
<dbReference type="GO" id="GO:0006412">
    <property type="term" value="P:translation"/>
    <property type="evidence" value="ECO:0007669"/>
    <property type="project" value="UniProtKB-UniRule"/>
</dbReference>
<dbReference type="CDD" id="cd14871">
    <property type="entry name" value="uS7_Chloroplast"/>
    <property type="match status" value="1"/>
</dbReference>
<dbReference type="FunFam" id="1.10.455.10:FF:000001">
    <property type="entry name" value="30S ribosomal protein S7"/>
    <property type="match status" value="1"/>
</dbReference>
<dbReference type="Gene3D" id="1.10.455.10">
    <property type="entry name" value="Ribosomal protein S7 domain"/>
    <property type="match status" value="1"/>
</dbReference>
<dbReference type="HAMAP" id="MF_00480_B">
    <property type="entry name" value="Ribosomal_uS7_B"/>
    <property type="match status" value="1"/>
</dbReference>
<dbReference type="InterPro" id="IPR000235">
    <property type="entry name" value="Ribosomal_uS7"/>
</dbReference>
<dbReference type="InterPro" id="IPR005717">
    <property type="entry name" value="Ribosomal_uS7_bac/org-type"/>
</dbReference>
<dbReference type="InterPro" id="IPR020606">
    <property type="entry name" value="Ribosomal_uS7_CS"/>
</dbReference>
<dbReference type="InterPro" id="IPR023798">
    <property type="entry name" value="Ribosomal_uS7_dom"/>
</dbReference>
<dbReference type="InterPro" id="IPR036823">
    <property type="entry name" value="Ribosomal_uS7_dom_sf"/>
</dbReference>
<dbReference type="NCBIfam" id="TIGR01029">
    <property type="entry name" value="rpsG_bact"/>
    <property type="match status" value="1"/>
</dbReference>
<dbReference type="PANTHER" id="PTHR11205">
    <property type="entry name" value="RIBOSOMAL PROTEIN S7"/>
    <property type="match status" value="1"/>
</dbReference>
<dbReference type="Pfam" id="PF00177">
    <property type="entry name" value="Ribosomal_S7"/>
    <property type="match status" value="1"/>
</dbReference>
<dbReference type="PIRSF" id="PIRSF002122">
    <property type="entry name" value="RPS7p_RPS7a_RPS5e_RPS7o"/>
    <property type="match status" value="1"/>
</dbReference>
<dbReference type="SUPFAM" id="SSF47973">
    <property type="entry name" value="Ribosomal protein S7"/>
    <property type="match status" value="1"/>
</dbReference>
<dbReference type="PROSITE" id="PS00052">
    <property type="entry name" value="RIBOSOMAL_S7"/>
    <property type="match status" value="1"/>
</dbReference>
<name>RR7_NYMOD</name>
<organism>
    <name type="scientific">Nymphaea odorata</name>
    <name type="common">White water lily</name>
    <dbReference type="NCBI Taxonomy" id="4419"/>
    <lineage>
        <taxon>Eukaryota</taxon>
        <taxon>Viridiplantae</taxon>
        <taxon>Streptophyta</taxon>
        <taxon>Embryophyta</taxon>
        <taxon>Tracheophyta</taxon>
        <taxon>Spermatophyta</taxon>
        <taxon>Magnoliopsida</taxon>
        <taxon>Nymphaeales</taxon>
        <taxon>Nymphaeaceae</taxon>
        <taxon>Nymphaea</taxon>
    </lineage>
</organism>
<accession>Q9MSP1</accession>
<protein>
    <recommendedName>
        <fullName evidence="2">Small ribosomal subunit protein uS7c</fullName>
    </recommendedName>
    <alternativeName>
        <fullName>30S ribosomal protein S7, chloroplastic</fullName>
    </alternativeName>
</protein>
<proteinExistence type="inferred from homology"/>
<gene>
    <name type="primary">rps7</name>
</gene>
<sequence>MSRRGTAEEKTAKSDPIYRNRLVNMLVNRILKHGKKSLAYQIIYRAVKKIQQKTETNPLSVLRQAIRGVTPNIAVKARRVGGSTHQVPIEIGSTQGKALAIRWLLGASRKRPGRNMAFKLSSELVDAARGSGDAIRKKEETHRMAEANRAFAHFR</sequence>
<evidence type="ECO:0000250" key="1"/>
<evidence type="ECO:0000305" key="2"/>
<reference key="1">
    <citation type="journal article" date="2000" name="Curr. Genet.">
        <title>Evolutionary significance of an unusual chloroplast DNA inversion found in two basal angiosperm lineages.</title>
        <authorList>
            <person name="Graham S.W."/>
            <person name="Olmstead R.G."/>
        </authorList>
    </citation>
    <scope>NUCLEOTIDE SEQUENCE [GENOMIC DNA]</scope>
</reference>
<keyword id="KW-0150">Chloroplast</keyword>
<keyword id="KW-0934">Plastid</keyword>
<keyword id="KW-0687">Ribonucleoprotein</keyword>
<keyword id="KW-0689">Ribosomal protein</keyword>
<keyword id="KW-0694">RNA-binding</keyword>
<keyword id="KW-0699">rRNA-binding</keyword>
<geneLocation type="chloroplast"/>
<comment type="function">
    <text evidence="1">One of the primary rRNA binding proteins, it binds directly to 16S rRNA where it nucleates assembly of the head domain of the 30S subunit.</text>
</comment>
<comment type="subunit">
    <text>Part of the 30S ribosomal subunit.</text>
</comment>
<comment type="subcellular location">
    <subcellularLocation>
        <location>Plastid</location>
        <location>Chloroplast</location>
    </subcellularLocation>
</comment>
<comment type="similarity">
    <text evidence="2">Belongs to the universal ribosomal protein uS7 family.</text>
</comment>